<sequence length="328" mass="35883">MLNEFPIFDYEDIQLIPNKCVIKSRAEADTSVTLGNHTFKLPVVPANMQTILDENVAEQLAKGGYFYIMHRFDEAGRIPFIKRMHDQGLIASISVGVKDYEYDFVSQLKADAPEYITIDIAHGHADSVISMIQHIKKELPDTFVIAGNVGTPEAVRELENAGADATKVGIGPGKVCITKVKTGFGTGGWQLAALRWCAKAARKPIIADGGIRTHGDIAKSIRFGASMIMIGSLFAGHIESPGKTIEVDGEQFKEYYGSASQYQKGAYKNVEGKRILLPAKGHLQDTLTEMEQDLQSAISYAGGRQVADLKHVDYVIVKNSIWNGDASH</sequence>
<feature type="chain" id="PRO_0000294288" description="GMP reductase">
    <location>
        <begin position="1"/>
        <end position="328"/>
    </location>
</feature>
<feature type="active site" description="Thioimidate intermediate" evidence="1">
    <location>
        <position position="176"/>
    </location>
</feature>
<feature type="binding site" evidence="1">
    <location>
        <begin position="205"/>
        <end position="228"/>
    </location>
    <ligand>
        <name>NADP(+)</name>
        <dbReference type="ChEBI" id="CHEBI:58349"/>
    </ligand>
</feature>
<organism>
    <name type="scientific">Streptococcus pneumoniae serotype 2 (strain D39 / NCTC 7466)</name>
    <dbReference type="NCBI Taxonomy" id="373153"/>
    <lineage>
        <taxon>Bacteria</taxon>
        <taxon>Bacillati</taxon>
        <taxon>Bacillota</taxon>
        <taxon>Bacilli</taxon>
        <taxon>Lactobacillales</taxon>
        <taxon>Streptococcaceae</taxon>
        <taxon>Streptococcus</taxon>
    </lineage>
</organism>
<gene>
    <name evidence="1" type="primary">guaC</name>
    <name type="ordered locus">SPD_1107</name>
</gene>
<keyword id="KW-0521">NADP</keyword>
<keyword id="KW-0560">Oxidoreductase</keyword>
<keyword id="KW-1185">Reference proteome</keyword>
<dbReference type="EC" id="1.7.1.7" evidence="1"/>
<dbReference type="EMBL" id="CP000410">
    <property type="protein sequence ID" value="ABJ54561.1"/>
    <property type="molecule type" value="Genomic_DNA"/>
</dbReference>
<dbReference type="RefSeq" id="WP_000931162.1">
    <property type="nucleotide sequence ID" value="NZ_JAMLJR010000006.1"/>
</dbReference>
<dbReference type="SMR" id="Q04K71"/>
<dbReference type="PaxDb" id="373153-SPD_1107"/>
<dbReference type="KEGG" id="spd:SPD_1107"/>
<dbReference type="eggNOG" id="COG0516">
    <property type="taxonomic scope" value="Bacteria"/>
</dbReference>
<dbReference type="HOGENOM" id="CLU_022552_5_0_9"/>
<dbReference type="BioCyc" id="SPNE373153:G1G6V-1198-MONOMER"/>
<dbReference type="Proteomes" id="UP000001452">
    <property type="component" value="Chromosome"/>
</dbReference>
<dbReference type="GO" id="GO:0005829">
    <property type="term" value="C:cytosol"/>
    <property type="evidence" value="ECO:0007669"/>
    <property type="project" value="TreeGrafter"/>
</dbReference>
<dbReference type="GO" id="GO:1902560">
    <property type="term" value="C:GMP reductase complex"/>
    <property type="evidence" value="ECO:0007669"/>
    <property type="project" value="InterPro"/>
</dbReference>
<dbReference type="GO" id="GO:0003920">
    <property type="term" value="F:GMP reductase activity"/>
    <property type="evidence" value="ECO:0007669"/>
    <property type="project" value="UniProtKB-UniRule"/>
</dbReference>
<dbReference type="GO" id="GO:0006163">
    <property type="term" value="P:purine nucleotide metabolic process"/>
    <property type="evidence" value="ECO:0007669"/>
    <property type="project" value="UniProtKB-UniRule"/>
</dbReference>
<dbReference type="CDD" id="cd00381">
    <property type="entry name" value="IMPDH"/>
    <property type="match status" value="1"/>
</dbReference>
<dbReference type="FunFam" id="3.20.20.70:FF:000079">
    <property type="entry name" value="GMP reductase"/>
    <property type="match status" value="1"/>
</dbReference>
<dbReference type="Gene3D" id="3.20.20.70">
    <property type="entry name" value="Aldolase class I"/>
    <property type="match status" value="1"/>
</dbReference>
<dbReference type="HAMAP" id="MF_01511">
    <property type="entry name" value="GMP_reduct_type2"/>
    <property type="match status" value="1"/>
</dbReference>
<dbReference type="InterPro" id="IPR013785">
    <property type="entry name" value="Aldolase_TIM"/>
</dbReference>
<dbReference type="InterPro" id="IPR050139">
    <property type="entry name" value="GMP_reductase"/>
</dbReference>
<dbReference type="InterPro" id="IPR005994">
    <property type="entry name" value="GuaC_type_2"/>
</dbReference>
<dbReference type="InterPro" id="IPR015875">
    <property type="entry name" value="IMP_DH/GMP_Rdtase_CS"/>
</dbReference>
<dbReference type="InterPro" id="IPR001093">
    <property type="entry name" value="IMP_DH_GMPRt"/>
</dbReference>
<dbReference type="NCBIfam" id="TIGR01306">
    <property type="entry name" value="GMP_reduct_2"/>
    <property type="match status" value="1"/>
</dbReference>
<dbReference type="NCBIfam" id="NF003966">
    <property type="entry name" value="PRK05458.1"/>
    <property type="match status" value="1"/>
</dbReference>
<dbReference type="PANTHER" id="PTHR43170">
    <property type="entry name" value="GMP REDUCTASE"/>
    <property type="match status" value="1"/>
</dbReference>
<dbReference type="PANTHER" id="PTHR43170:SF5">
    <property type="entry name" value="GMP REDUCTASE"/>
    <property type="match status" value="1"/>
</dbReference>
<dbReference type="Pfam" id="PF00478">
    <property type="entry name" value="IMPDH"/>
    <property type="match status" value="1"/>
</dbReference>
<dbReference type="PIRSF" id="PIRSF036500">
    <property type="entry name" value="GMP_red_Firmic"/>
    <property type="match status" value="1"/>
</dbReference>
<dbReference type="SMART" id="SM01240">
    <property type="entry name" value="IMPDH"/>
    <property type="match status" value="1"/>
</dbReference>
<dbReference type="SUPFAM" id="SSF51412">
    <property type="entry name" value="Inosine monophosphate dehydrogenase (IMPDH)"/>
    <property type="match status" value="1"/>
</dbReference>
<dbReference type="PROSITE" id="PS00487">
    <property type="entry name" value="IMP_DH_GMP_RED"/>
    <property type="match status" value="1"/>
</dbReference>
<reference key="1">
    <citation type="journal article" date="2007" name="J. Bacteriol.">
        <title>Genome sequence of Avery's virulent serotype 2 strain D39 of Streptococcus pneumoniae and comparison with that of unencapsulated laboratory strain R6.</title>
        <authorList>
            <person name="Lanie J.A."/>
            <person name="Ng W.-L."/>
            <person name="Kazmierczak K.M."/>
            <person name="Andrzejewski T.M."/>
            <person name="Davidsen T.M."/>
            <person name="Wayne K.J."/>
            <person name="Tettelin H."/>
            <person name="Glass J.I."/>
            <person name="Winkler M.E."/>
        </authorList>
    </citation>
    <scope>NUCLEOTIDE SEQUENCE [LARGE SCALE GENOMIC DNA]</scope>
    <source>
        <strain>D39 / NCTC 7466</strain>
    </source>
</reference>
<name>GUAC_STRP2</name>
<evidence type="ECO:0000255" key="1">
    <source>
        <dbReference type="HAMAP-Rule" id="MF_01511"/>
    </source>
</evidence>
<protein>
    <recommendedName>
        <fullName evidence="1">GMP reductase</fullName>
        <ecNumber evidence="1">1.7.1.7</ecNumber>
    </recommendedName>
    <alternativeName>
        <fullName evidence="1">Guanosine 5'-monophosphate oxidoreductase</fullName>
        <shortName evidence="1">Guanosine monophosphate reductase</shortName>
    </alternativeName>
</protein>
<accession>Q04K71</accession>
<proteinExistence type="inferred from homology"/>
<comment type="function">
    <text evidence="1">Catalyzes the irreversible NADPH-dependent deamination of GMP to IMP. It functions in the conversion of nucleobase, nucleoside and nucleotide derivatives of G to A nucleotides, and in maintaining the intracellular balance of A and G nucleotides.</text>
</comment>
<comment type="catalytic activity">
    <reaction evidence="1">
        <text>IMP + NH4(+) + NADP(+) = GMP + NADPH + 2 H(+)</text>
        <dbReference type="Rhea" id="RHEA:17185"/>
        <dbReference type="ChEBI" id="CHEBI:15378"/>
        <dbReference type="ChEBI" id="CHEBI:28938"/>
        <dbReference type="ChEBI" id="CHEBI:57783"/>
        <dbReference type="ChEBI" id="CHEBI:58053"/>
        <dbReference type="ChEBI" id="CHEBI:58115"/>
        <dbReference type="ChEBI" id="CHEBI:58349"/>
        <dbReference type="EC" id="1.7.1.7"/>
    </reaction>
</comment>
<comment type="similarity">
    <text evidence="1">Belongs to the IMPDH/GMPR family. GuaC type 2 subfamily.</text>
</comment>